<feature type="chain" id="PRO_0000178525" description="Large ribosomal subunit protein bL28">
    <location>
        <begin position="1"/>
        <end position="78"/>
    </location>
</feature>
<feature type="region of interest" description="Disordered" evidence="2">
    <location>
        <begin position="1"/>
        <end position="20"/>
    </location>
</feature>
<name>RL28_PHOPR</name>
<protein>
    <recommendedName>
        <fullName evidence="1">Large ribosomal subunit protein bL28</fullName>
    </recommendedName>
    <alternativeName>
        <fullName evidence="3">50S ribosomal protein L28</fullName>
    </alternativeName>
</protein>
<sequence length="78" mass="9077">MSRVCQVTGKRPVTGNNRSHARNATKRRFLPNLQTHRFWVESEKRFVKLRLTAKGMRIIDKKGIDIVLAEMRVRGESV</sequence>
<organism>
    <name type="scientific">Photobacterium profundum (strain SS9)</name>
    <dbReference type="NCBI Taxonomy" id="298386"/>
    <lineage>
        <taxon>Bacteria</taxon>
        <taxon>Pseudomonadati</taxon>
        <taxon>Pseudomonadota</taxon>
        <taxon>Gammaproteobacteria</taxon>
        <taxon>Vibrionales</taxon>
        <taxon>Vibrionaceae</taxon>
        <taxon>Photobacterium</taxon>
    </lineage>
</organism>
<comment type="similarity">
    <text evidence="1">Belongs to the bacterial ribosomal protein bL28 family.</text>
</comment>
<comment type="sequence caution" evidence="3">
    <conflict type="erroneous initiation">
        <sequence resource="EMBL-CDS" id="CAG18642"/>
    </conflict>
</comment>
<gene>
    <name evidence="1" type="primary">rpmB</name>
    <name type="ordered locus">PBPRA0203</name>
</gene>
<keyword id="KW-1185">Reference proteome</keyword>
<keyword id="KW-0687">Ribonucleoprotein</keyword>
<keyword id="KW-0689">Ribosomal protein</keyword>
<dbReference type="EMBL" id="CR378663">
    <property type="protein sequence ID" value="CAG18642.1"/>
    <property type="status" value="ALT_INIT"/>
    <property type="molecule type" value="Genomic_DNA"/>
</dbReference>
<dbReference type="RefSeq" id="WP_041393824.1">
    <property type="nucleotide sequence ID" value="NC_006370.1"/>
</dbReference>
<dbReference type="SMR" id="Q6LVN3"/>
<dbReference type="STRING" id="298386.PBPRA0203"/>
<dbReference type="KEGG" id="ppr:PBPRA0203"/>
<dbReference type="eggNOG" id="COG0227">
    <property type="taxonomic scope" value="Bacteria"/>
</dbReference>
<dbReference type="HOGENOM" id="CLU_064548_3_1_6"/>
<dbReference type="Proteomes" id="UP000000593">
    <property type="component" value="Chromosome 1"/>
</dbReference>
<dbReference type="GO" id="GO:0022625">
    <property type="term" value="C:cytosolic large ribosomal subunit"/>
    <property type="evidence" value="ECO:0007669"/>
    <property type="project" value="TreeGrafter"/>
</dbReference>
<dbReference type="GO" id="GO:0003735">
    <property type="term" value="F:structural constituent of ribosome"/>
    <property type="evidence" value="ECO:0007669"/>
    <property type="project" value="InterPro"/>
</dbReference>
<dbReference type="GO" id="GO:0006412">
    <property type="term" value="P:translation"/>
    <property type="evidence" value="ECO:0007669"/>
    <property type="project" value="UniProtKB-UniRule"/>
</dbReference>
<dbReference type="FunFam" id="2.30.170.40:FF:000001">
    <property type="entry name" value="50S ribosomal protein L28"/>
    <property type="match status" value="1"/>
</dbReference>
<dbReference type="Gene3D" id="2.30.170.40">
    <property type="entry name" value="Ribosomal protein L28/L24"/>
    <property type="match status" value="1"/>
</dbReference>
<dbReference type="HAMAP" id="MF_00373">
    <property type="entry name" value="Ribosomal_bL28"/>
    <property type="match status" value="1"/>
</dbReference>
<dbReference type="InterPro" id="IPR026569">
    <property type="entry name" value="Ribosomal_bL28"/>
</dbReference>
<dbReference type="InterPro" id="IPR034704">
    <property type="entry name" value="Ribosomal_bL28/bL31-like_sf"/>
</dbReference>
<dbReference type="InterPro" id="IPR001383">
    <property type="entry name" value="Ribosomal_bL28_bact-type"/>
</dbReference>
<dbReference type="InterPro" id="IPR037147">
    <property type="entry name" value="Ribosomal_bL28_sf"/>
</dbReference>
<dbReference type="NCBIfam" id="TIGR00009">
    <property type="entry name" value="L28"/>
    <property type="match status" value="1"/>
</dbReference>
<dbReference type="PANTHER" id="PTHR13528">
    <property type="entry name" value="39S RIBOSOMAL PROTEIN L28, MITOCHONDRIAL"/>
    <property type="match status" value="1"/>
</dbReference>
<dbReference type="PANTHER" id="PTHR13528:SF2">
    <property type="entry name" value="LARGE RIBOSOMAL SUBUNIT PROTEIN BL28M"/>
    <property type="match status" value="1"/>
</dbReference>
<dbReference type="Pfam" id="PF00830">
    <property type="entry name" value="Ribosomal_L28"/>
    <property type="match status" value="1"/>
</dbReference>
<dbReference type="SUPFAM" id="SSF143800">
    <property type="entry name" value="L28p-like"/>
    <property type="match status" value="1"/>
</dbReference>
<reference key="1">
    <citation type="journal article" date="2005" name="Science">
        <title>Life at depth: Photobacterium profundum genome sequence and expression analysis.</title>
        <authorList>
            <person name="Vezzi A."/>
            <person name="Campanaro S."/>
            <person name="D'Angelo M."/>
            <person name="Simonato F."/>
            <person name="Vitulo N."/>
            <person name="Lauro F.M."/>
            <person name="Cestaro A."/>
            <person name="Malacrida G."/>
            <person name="Simionati B."/>
            <person name="Cannata N."/>
            <person name="Romualdi C."/>
            <person name="Bartlett D.H."/>
            <person name="Valle G."/>
        </authorList>
    </citation>
    <scope>NUCLEOTIDE SEQUENCE [LARGE SCALE GENOMIC DNA]</scope>
    <source>
        <strain>ATCC BAA-1253 / SS9</strain>
    </source>
</reference>
<proteinExistence type="inferred from homology"/>
<evidence type="ECO:0000255" key="1">
    <source>
        <dbReference type="HAMAP-Rule" id="MF_00373"/>
    </source>
</evidence>
<evidence type="ECO:0000256" key="2">
    <source>
        <dbReference type="SAM" id="MobiDB-lite"/>
    </source>
</evidence>
<evidence type="ECO:0000305" key="3"/>
<accession>Q6LVN3</accession>